<organism>
    <name type="scientific">Anaeromyxobacter sp. (strain Fw109-5)</name>
    <dbReference type="NCBI Taxonomy" id="404589"/>
    <lineage>
        <taxon>Bacteria</taxon>
        <taxon>Pseudomonadati</taxon>
        <taxon>Myxococcota</taxon>
        <taxon>Myxococcia</taxon>
        <taxon>Myxococcales</taxon>
        <taxon>Cystobacterineae</taxon>
        <taxon>Anaeromyxobacteraceae</taxon>
        <taxon>Anaeromyxobacter</taxon>
    </lineage>
</organism>
<reference key="1">
    <citation type="journal article" date="2015" name="Genome Announc.">
        <title>Complete genome sequence of Anaeromyxobacter sp. Fw109-5, an anaerobic, metal-reducing bacterium isolated from a contaminated subsurface environment.</title>
        <authorList>
            <person name="Hwang C."/>
            <person name="Copeland A."/>
            <person name="Lucas S."/>
            <person name="Lapidus A."/>
            <person name="Barry K."/>
            <person name="Glavina Del Rio T."/>
            <person name="Dalin E."/>
            <person name="Tice H."/>
            <person name="Pitluck S."/>
            <person name="Sims D."/>
            <person name="Brettin T."/>
            <person name="Bruce D.C."/>
            <person name="Detter J.C."/>
            <person name="Han C.S."/>
            <person name="Schmutz J."/>
            <person name="Larimer F.W."/>
            <person name="Land M.L."/>
            <person name="Hauser L.J."/>
            <person name="Kyrpides N."/>
            <person name="Lykidis A."/>
            <person name="Richardson P."/>
            <person name="Belieav A."/>
            <person name="Sanford R.A."/>
            <person name="Loeffler F.E."/>
            <person name="Fields M.W."/>
        </authorList>
    </citation>
    <scope>NUCLEOTIDE SEQUENCE [LARGE SCALE GENOMIC DNA]</scope>
    <source>
        <strain>Fw109-5</strain>
    </source>
</reference>
<dbReference type="EC" id="2.3.2.6" evidence="1"/>
<dbReference type="EMBL" id="CP000769">
    <property type="protein sequence ID" value="ABS25048.1"/>
    <property type="molecule type" value="Genomic_DNA"/>
</dbReference>
<dbReference type="RefSeq" id="WP_011985154.1">
    <property type="nucleotide sequence ID" value="NC_009675.1"/>
</dbReference>
<dbReference type="SMR" id="A7H8K2"/>
<dbReference type="STRING" id="404589.Anae109_0837"/>
<dbReference type="KEGG" id="afw:Anae109_0837"/>
<dbReference type="eggNOG" id="COG2360">
    <property type="taxonomic scope" value="Bacteria"/>
</dbReference>
<dbReference type="HOGENOM" id="CLU_075045_0_0_7"/>
<dbReference type="OrthoDB" id="9790282at2"/>
<dbReference type="Proteomes" id="UP000006382">
    <property type="component" value="Chromosome"/>
</dbReference>
<dbReference type="GO" id="GO:0005737">
    <property type="term" value="C:cytoplasm"/>
    <property type="evidence" value="ECO:0007669"/>
    <property type="project" value="UniProtKB-SubCell"/>
</dbReference>
<dbReference type="GO" id="GO:0008914">
    <property type="term" value="F:leucyl-tRNA--protein transferase activity"/>
    <property type="evidence" value="ECO:0007669"/>
    <property type="project" value="UniProtKB-UniRule"/>
</dbReference>
<dbReference type="GO" id="GO:0030163">
    <property type="term" value="P:protein catabolic process"/>
    <property type="evidence" value="ECO:0007669"/>
    <property type="project" value="UniProtKB-UniRule"/>
</dbReference>
<dbReference type="FunFam" id="3.30.70.3550:FF:000001">
    <property type="entry name" value="Leucyl/phenylalanyl-tRNA--protein transferase"/>
    <property type="match status" value="1"/>
</dbReference>
<dbReference type="FunFam" id="3.40.630.70:FF:000001">
    <property type="entry name" value="Leucyl/phenylalanyl-tRNA--protein transferase"/>
    <property type="match status" value="1"/>
</dbReference>
<dbReference type="Gene3D" id="3.40.630.70">
    <property type="entry name" value="Leucyl/phenylalanyl-tRNA-protein transferase, C-terminal domain"/>
    <property type="match status" value="1"/>
</dbReference>
<dbReference type="Gene3D" id="3.30.70.3550">
    <property type="entry name" value="Leucyl/phenylalanyl-tRNA-protein transferase, N-terminal domain"/>
    <property type="match status" value="1"/>
</dbReference>
<dbReference type="HAMAP" id="MF_00688">
    <property type="entry name" value="Leu_Phe_trans"/>
    <property type="match status" value="1"/>
</dbReference>
<dbReference type="InterPro" id="IPR016181">
    <property type="entry name" value="Acyl_CoA_acyltransferase"/>
</dbReference>
<dbReference type="InterPro" id="IPR004616">
    <property type="entry name" value="Leu/Phe-tRNA_Trfase"/>
</dbReference>
<dbReference type="InterPro" id="IPR042203">
    <property type="entry name" value="Leu/Phe-tRNA_Trfase_C"/>
</dbReference>
<dbReference type="InterPro" id="IPR042221">
    <property type="entry name" value="Leu/Phe-tRNA_Trfase_N"/>
</dbReference>
<dbReference type="NCBIfam" id="TIGR00667">
    <property type="entry name" value="aat"/>
    <property type="match status" value="1"/>
</dbReference>
<dbReference type="PANTHER" id="PTHR30098">
    <property type="entry name" value="LEUCYL/PHENYLALANYL-TRNA--PROTEIN TRANSFERASE"/>
    <property type="match status" value="1"/>
</dbReference>
<dbReference type="PANTHER" id="PTHR30098:SF2">
    <property type="entry name" value="LEUCYL_PHENYLALANYL-TRNA--PROTEIN TRANSFERASE"/>
    <property type="match status" value="1"/>
</dbReference>
<dbReference type="Pfam" id="PF03588">
    <property type="entry name" value="Leu_Phe_trans"/>
    <property type="match status" value="1"/>
</dbReference>
<dbReference type="SUPFAM" id="SSF55729">
    <property type="entry name" value="Acyl-CoA N-acyltransferases (Nat)"/>
    <property type="match status" value="1"/>
</dbReference>
<protein>
    <recommendedName>
        <fullName evidence="1">Leucyl/phenylalanyl-tRNA--protein transferase</fullName>
        <ecNumber evidence="1">2.3.2.6</ecNumber>
    </recommendedName>
    <alternativeName>
        <fullName evidence="1">L/F-transferase</fullName>
    </alternativeName>
    <alternativeName>
        <fullName evidence="1">Leucyltransferase</fullName>
    </alternativeName>
    <alternativeName>
        <fullName evidence="1">Phenyalanyltransferase</fullName>
    </alternativeName>
</protein>
<evidence type="ECO:0000255" key="1">
    <source>
        <dbReference type="HAMAP-Rule" id="MF_00688"/>
    </source>
</evidence>
<keyword id="KW-0012">Acyltransferase</keyword>
<keyword id="KW-0963">Cytoplasm</keyword>
<keyword id="KW-1185">Reference proteome</keyword>
<keyword id="KW-0808">Transferase</keyword>
<comment type="function">
    <text evidence="1">Functions in the N-end rule pathway of protein degradation where it conjugates Leu, Phe and, less efficiently, Met from aminoacyl-tRNAs to the N-termini of proteins containing an N-terminal arginine or lysine.</text>
</comment>
<comment type="catalytic activity">
    <reaction evidence="1">
        <text>N-terminal L-lysyl-[protein] + L-leucyl-tRNA(Leu) = N-terminal L-leucyl-L-lysyl-[protein] + tRNA(Leu) + H(+)</text>
        <dbReference type="Rhea" id="RHEA:12340"/>
        <dbReference type="Rhea" id="RHEA-COMP:9613"/>
        <dbReference type="Rhea" id="RHEA-COMP:9622"/>
        <dbReference type="Rhea" id="RHEA-COMP:12670"/>
        <dbReference type="Rhea" id="RHEA-COMP:12671"/>
        <dbReference type="ChEBI" id="CHEBI:15378"/>
        <dbReference type="ChEBI" id="CHEBI:65249"/>
        <dbReference type="ChEBI" id="CHEBI:78442"/>
        <dbReference type="ChEBI" id="CHEBI:78494"/>
        <dbReference type="ChEBI" id="CHEBI:133043"/>
        <dbReference type="EC" id="2.3.2.6"/>
    </reaction>
</comment>
<comment type="catalytic activity">
    <reaction evidence="1">
        <text>N-terminal L-arginyl-[protein] + L-leucyl-tRNA(Leu) = N-terminal L-leucyl-L-arginyl-[protein] + tRNA(Leu) + H(+)</text>
        <dbReference type="Rhea" id="RHEA:50416"/>
        <dbReference type="Rhea" id="RHEA-COMP:9613"/>
        <dbReference type="Rhea" id="RHEA-COMP:9622"/>
        <dbReference type="Rhea" id="RHEA-COMP:12672"/>
        <dbReference type="Rhea" id="RHEA-COMP:12673"/>
        <dbReference type="ChEBI" id="CHEBI:15378"/>
        <dbReference type="ChEBI" id="CHEBI:64719"/>
        <dbReference type="ChEBI" id="CHEBI:78442"/>
        <dbReference type="ChEBI" id="CHEBI:78494"/>
        <dbReference type="ChEBI" id="CHEBI:133044"/>
        <dbReference type="EC" id="2.3.2.6"/>
    </reaction>
</comment>
<comment type="catalytic activity">
    <reaction evidence="1">
        <text>L-phenylalanyl-tRNA(Phe) + an N-terminal L-alpha-aminoacyl-[protein] = an N-terminal L-phenylalanyl-L-alpha-aminoacyl-[protein] + tRNA(Phe)</text>
        <dbReference type="Rhea" id="RHEA:43632"/>
        <dbReference type="Rhea" id="RHEA-COMP:9668"/>
        <dbReference type="Rhea" id="RHEA-COMP:9699"/>
        <dbReference type="Rhea" id="RHEA-COMP:10636"/>
        <dbReference type="Rhea" id="RHEA-COMP:10637"/>
        <dbReference type="ChEBI" id="CHEBI:78442"/>
        <dbReference type="ChEBI" id="CHEBI:78531"/>
        <dbReference type="ChEBI" id="CHEBI:78597"/>
        <dbReference type="ChEBI" id="CHEBI:83561"/>
        <dbReference type="EC" id="2.3.2.6"/>
    </reaction>
</comment>
<comment type="subcellular location">
    <subcellularLocation>
        <location evidence="1">Cytoplasm</location>
    </subcellularLocation>
</comment>
<comment type="similarity">
    <text evidence="1">Belongs to the L/F-transferase family.</text>
</comment>
<proteinExistence type="inferred from homology"/>
<name>LFTR_ANADF</name>
<feature type="chain" id="PRO_1000045100" description="Leucyl/phenylalanyl-tRNA--protein transferase">
    <location>
        <begin position="1"/>
        <end position="235"/>
    </location>
</feature>
<gene>
    <name evidence="1" type="primary">aat</name>
    <name type="ordered locus">Anae109_0837</name>
</gene>
<accession>A7H8K2</accession>
<sequence length="235" mass="26359">MAIYRLPREVSFPDPDLAEPDGLLAVGGDLSPERLLTAYAAGIFPWYGEDTPILWWSPDPRLVLEPERLHVSASLARTIRRGRYRVTADRAFEDVVRRCAGRARPGQDGTWIVPEMIDAYVRLHRLGFAHSFEAWEGEALAGGLYGVSLGGAFFGESMFADRPDASKVAFVRSVEWLARWDVRLIDCQVRTEHLARFGAREIPRAEFLARLGRALDRPTLRGRWDLDAGDRPAGA</sequence>